<protein>
    <recommendedName>
        <fullName evidence="5">Vitelline membrane protein Vm32E</fullName>
    </recommendedName>
</protein>
<dbReference type="EMBL" id="EF441682">
    <property type="protein sequence ID" value="ABO71723.1"/>
    <property type="molecule type" value="Genomic_DNA"/>
</dbReference>
<dbReference type="EMBL" id="CM000361">
    <property type="protein sequence ID" value="EDX04680.1"/>
    <property type="molecule type" value="Genomic_DNA"/>
</dbReference>
<dbReference type="STRING" id="7240.A4UM14"/>
<dbReference type="EnsemblMetazoa" id="FBtr0222093">
    <property type="protein sequence ID" value="FBpp0220585"/>
    <property type="gene ID" value="FBgn0193593"/>
</dbReference>
<dbReference type="EnsemblMetazoa" id="XM_002079059.3">
    <property type="protein sequence ID" value="XP_002079095.1"/>
    <property type="gene ID" value="LOC6731960"/>
</dbReference>
<dbReference type="GeneID" id="6731960"/>
<dbReference type="CTD" id="34558"/>
<dbReference type="HOGENOM" id="CLU_169196_0_0_1"/>
<dbReference type="OMA" id="CAQEAQA"/>
<dbReference type="OrthoDB" id="8062718at2759"/>
<dbReference type="PhylomeDB" id="A4UM14"/>
<dbReference type="Proteomes" id="UP000000304">
    <property type="component" value="Chromosome 2L"/>
</dbReference>
<dbReference type="Bgee" id="FBgn0193593">
    <property type="expression patterns" value="Expressed in adult organism and 2 other cell types or tissues"/>
</dbReference>
<dbReference type="GO" id="GO:0042600">
    <property type="term" value="C:egg chorion"/>
    <property type="evidence" value="ECO:0007669"/>
    <property type="project" value="EnsemblMetazoa"/>
</dbReference>
<dbReference type="GO" id="GO:0005615">
    <property type="term" value="C:extracellular space"/>
    <property type="evidence" value="ECO:0000250"/>
    <property type="project" value="UniProtKB"/>
</dbReference>
<dbReference type="GO" id="GO:0060388">
    <property type="term" value="C:vitelline envelope"/>
    <property type="evidence" value="ECO:0007669"/>
    <property type="project" value="EnsemblMetazoa"/>
</dbReference>
<dbReference type="GO" id="GO:0008316">
    <property type="term" value="F:structural constituent of vitelline membrane"/>
    <property type="evidence" value="ECO:0000250"/>
    <property type="project" value="UniProtKB"/>
</dbReference>
<dbReference type="GO" id="GO:0007305">
    <property type="term" value="P:vitelline membrane formation involved in chorion-containing eggshell formation"/>
    <property type="evidence" value="ECO:0000250"/>
    <property type="project" value="UniProtKB"/>
</dbReference>
<dbReference type="InterPro" id="IPR013135">
    <property type="entry name" value="Vitelline_membr_Cys-rich-dom"/>
</dbReference>
<dbReference type="Pfam" id="PF10542">
    <property type="entry name" value="Vitelline_membr"/>
    <property type="match status" value="1"/>
</dbReference>
<dbReference type="PROSITE" id="PS51137">
    <property type="entry name" value="VM"/>
    <property type="match status" value="1"/>
</dbReference>
<keyword id="KW-1185">Reference proteome</keyword>
<keyword id="KW-0964">Secreted</keyword>
<keyword id="KW-0732">Signal</keyword>
<proteinExistence type="inferred from homology"/>
<evidence type="ECO:0000250" key="1">
    <source>
        <dbReference type="UniProtKB" id="Q9VKI3"/>
    </source>
</evidence>
<evidence type="ECO:0000255" key="2"/>
<evidence type="ECO:0000255" key="3">
    <source>
        <dbReference type="PROSITE-ProRule" id="PRU00483"/>
    </source>
</evidence>
<evidence type="ECO:0000305" key="4"/>
<evidence type="ECO:0000312" key="5">
    <source>
        <dbReference type="EMBL" id="ABO71723.1"/>
    </source>
</evidence>
<evidence type="ECO:0000312" key="6">
    <source>
        <dbReference type="EMBL" id="EDX04680.1"/>
    </source>
</evidence>
<organism>
    <name type="scientific">Drosophila simulans</name>
    <name type="common">Fruit fly</name>
    <dbReference type="NCBI Taxonomy" id="7240"/>
    <lineage>
        <taxon>Eukaryota</taxon>
        <taxon>Metazoa</taxon>
        <taxon>Ecdysozoa</taxon>
        <taxon>Arthropoda</taxon>
        <taxon>Hexapoda</taxon>
        <taxon>Insecta</taxon>
        <taxon>Pterygota</taxon>
        <taxon>Neoptera</taxon>
        <taxon>Endopterygota</taxon>
        <taxon>Diptera</taxon>
        <taxon>Brachycera</taxon>
        <taxon>Muscomorpha</taxon>
        <taxon>Ephydroidea</taxon>
        <taxon>Drosophilidae</taxon>
        <taxon>Drosophila</taxon>
        <taxon>Sophophora</taxon>
    </lineage>
</organism>
<accession>A4UM14</accession>
<sequence length="118" mass="12305">MKIVALTLVAFVALAGASCPYAAPAPAYPAPAAPSGYPAPPCPTNYLFSCQPNLAPAPCAQEAQAPAYGSAGAYTEQVPHYVGSPNREQVQQFHQRIGMAALMEELRGLGQGIQGQQY</sequence>
<gene>
    <name evidence="5" type="primary">Vm32E</name>
    <name type="ORF">GD22183</name>
</gene>
<reference evidence="5" key="1">
    <citation type="journal article" date="2007" name="Mol. Biol. Evol.">
        <title>Rapid evolution of outer egg membrane proteins in the Drosophila melanogaster subgroup: a case of ecologically driven evolution of female reproductive traits.</title>
        <authorList>
            <person name="Jagadeeshan S."/>
            <person name="Singh R.S."/>
        </authorList>
    </citation>
    <scope>NUCLEOTIDE SEQUENCE [GENOMIC DNA]</scope>
</reference>
<reference evidence="6" key="2">
    <citation type="journal article" date="2007" name="Nature">
        <title>Evolution of genes and genomes on the Drosophila phylogeny.</title>
        <authorList>
            <consortium name="Drosophila 12 genomes consortium"/>
        </authorList>
    </citation>
    <scope>NUCLEOTIDE SEQUENCE [LARGE SCALE GENOMIC DNA]</scope>
</reference>
<feature type="signal peptide" evidence="2">
    <location>
        <begin position="1"/>
        <end position="17"/>
    </location>
</feature>
<feature type="chain" id="PRO_0000398800" description="Vitelline membrane protein Vm32E" evidence="2">
    <location>
        <begin position="18"/>
        <end position="118"/>
    </location>
</feature>
<feature type="domain" description="VM" evidence="3">
    <location>
        <begin position="36"/>
        <end position="75"/>
    </location>
</feature>
<name>VTU4_DROSI</name>
<comment type="function">
    <text evidence="1">Major early eggshell protein.</text>
</comment>
<comment type="subcellular location">
    <subcellularLocation>
        <location evidence="1">Secreted</location>
    </subcellularLocation>
</comment>
<comment type="similarity">
    <text evidence="4">Belongs to the vitelline membrane family.</text>
</comment>